<gene>
    <name type="primary">Tomm20l</name>
</gene>
<dbReference type="EMBL" id="AK016101">
    <property type="protein sequence ID" value="BAB30114.1"/>
    <property type="molecule type" value="mRNA"/>
</dbReference>
<dbReference type="CCDS" id="CCDS49080.1"/>
<dbReference type="RefSeq" id="NP_083503.1">
    <property type="nucleotide sequence ID" value="NM_029227.1"/>
</dbReference>
<dbReference type="SMR" id="Q9D4V6"/>
<dbReference type="FunCoup" id="Q9D4V6">
    <property type="interactions" value="6"/>
</dbReference>
<dbReference type="STRING" id="10090.ENSMUSP00000021482"/>
<dbReference type="PaxDb" id="10090-ENSMUSP00000021482"/>
<dbReference type="ProteomicsDB" id="260646"/>
<dbReference type="Antibodypedia" id="51460">
    <property type="antibodies" value="65 antibodies from 15 providers"/>
</dbReference>
<dbReference type="Ensembl" id="ENSMUST00000021482.6">
    <property type="protein sequence ID" value="ENSMUSP00000021482.5"/>
    <property type="gene ID" value="ENSMUSG00000021078.6"/>
</dbReference>
<dbReference type="GeneID" id="75266"/>
<dbReference type="KEGG" id="mmu:75266"/>
<dbReference type="UCSC" id="uc007nug.1">
    <property type="organism name" value="mouse"/>
</dbReference>
<dbReference type="AGR" id="MGI:1922516"/>
<dbReference type="CTD" id="387990"/>
<dbReference type="MGI" id="MGI:1922516">
    <property type="gene designation" value="Tomm20l"/>
</dbReference>
<dbReference type="VEuPathDB" id="HostDB:ENSMUSG00000021078"/>
<dbReference type="eggNOG" id="KOG4056">
    <property type="taxonomic scope" value="Eukaryota"/>
</dbReference>
<dbReference type="GeneTree" id="ENSGT00390000011698"/>
<dbReference type="HOGENOM" id="CLU_100000_2_0_1"/>
<dbReference type="InParanoid" id="Q9D4V6"/>
<dbReference type="OMA" id="LWLSRGQ"/>
<dbReference type="OrthoDB" id="2154253at2759"/>
<dbReference type="PhylomeDB" id="Q9D4V6"/>
<dbReference type="TreeFam" id="TF106200"/>
<dbReference type="BioGRID-ORCS" id="75266">
    <property type="hits" value="0 hits in 77 CRISPR screens"/>
</dbReference>
<dbReference type="PRO" id="PR:Q9D4V6"/>
<dbReference type="Proteomes" id="UP000000589">
    <property type="component" value="Chromosome 12"/>
</dbReference>
<dbReference type="RNAct" id="Q9D4V6">
    <property type="molecule type" value="protein"/>
</dbReference>
<dbReference type="Bgee" id="ENSMUSG00000021078">
    <property type="expression patterns" value="Expressed in spermatid and 25 other cell types or tissues"/>
</dbReference>
<dbReference type="ExpressionAtlas" id="Q9D4V6">
    <property type="expression patterns" value="baseline and differential"/>
</dbReference>
<dbReference type="GO" id="GO:0005742">
    <property type="term" value="C:mitochondrial outer membrane translocase complex"/>
    <property type="evidence" value="ECO:0007669"/>
    <property type="project" value="InterPro"/>
</dbReference>
<dbReference type="GO" id="GO:0006886">
    <property type="term" value="P:intracellular protein transport"/>
    <property type="evidence" value="ECO:0007669"/>
    <property type="project" value="InterPro"/>
</dbReference>
<dbReference type="GO" id="GO:0006605">
    <property type="term" value="P:protein targeting"/>
    <property type="evidence" value="ECO:0007669"/>
    <property type="project" value="InterPro"/>
</dbReference>
<dbReference type="FunFam" id="1.20.960.10:FF:000003">
    <property type="entry name" value="Translocase of outer mitochondrial membrane 20 like"/>
    <property type="match status" value="1"/>
</dbReference>
<dbReference type="Gene3D" id="1.20.960.10">
    <property type="entry name" value="Mitochondrial outer membrane translocase complex, subunit Tom20 domain"/>
    <property type="match status" value="1"/>
</dbReference>
<dbReference type="InterPro" id="IPR002056">
    <property type="entry name" value="MAS20"/>
</dbReference>
<dbReference type="InterPro" id="IPR022422">
    <property type="entry name" value="MAS20_rcpt_metazoan"/>
</dbReference>
<dbReference type="InterPro" id="IPR023392">
    <property type="entry name" value="Tom20_dom_sf"/>
</dbReference>
<dbReference type="PANTHER" id="PTHR12430">
    <property type="entry name" value="MITOCHONDRIAL IMPORT RECEPTOR SUBUNIT TOM20"/>
    <property type="match status" value="1"/>
</dbReference>
<dbReference type="PANTHER" id="PTHR12430:SF1">
    <property type="entry name" value="TOMM20-LIKE PROTEIN 1"/>
    <property type="match status" value="1"/>
</dbReference>
<dbReference type="Pfam" id="PF02064">
    <property type="entry name" value="MAS20"/>
    <property type="match status" value="1"/>
</dbReference>
<dbReference type="PIRSF" id="PIRSF037707">
    <property type="entry name" value="MAS20_rcpt"/>
    <property type="match status" value="1"/>
</dbReference>
<dbReference type="PRINTS" id="PR01989">
    <property type="entry name" value="EUOM20RECPTR"/>
</dbReference>
<dbReference type="PRINTS" id="PR00351">
    <property type="entry name" value="OM20RECEPTOR"/>
</dbReference>
<dbReference type="SUPFAM" id="SSF47157">
    <property type="entry name" value="Mitochondrial import receptor subunit Tom20"/>
    <property type="match status" value="1"/>
</dbReference>
<reference key="1">
    <citation type="journal article" date="2005" name="Science">
        <title>The transcriptional landscape of the mammalian genome.</title>
        <authorList>
            <person name="Carninci P."/>
            <person name="Kasukawa T."/>
            <person name="Katayama S."/>
            <person name="Gough J."/>
            <person name="Frith M.C."/>
            <person name="Maeda N."/>
            <person name="Oyama R."/>
            <person name="Ravasi T."/>
            <person name="Lenhard B."/>
            <person name="Wells C."/>
            <person name="Kodzius R."/>
            <person name="Shimokawa K."/>
            <person name="Bajic V.B."/>
            <person name="Brenner S.E."/>
            <person name="Batalov S."/>
            <person name="Forrest A.R."/>
            <person name="Zavolan M."/>
            <person name="Davis M.J."/>
            <person name="Wilming L.G."/>
            <person name="Aidinis V."/>
            <person name="Allen J.E."/>
            <person name="Ambesi-Impiombato A."/>
            <person name="Apweiler R."/>
            <person name="Aturaliya R.N."/>
            <person name="Bailey T.L."/>
            <person name="Bansal M."/>
            <person name="Baxter L."/>
            <person name="Beisel K.W."/>
            <person name="Bersano T."/>
            <person name="Bono H."/>
            <person name="Chalk A.M."/>
            <person name="Chiu K.P."/>
            <person name="Choudhary V."/>
            <person name="Christoffels A."/>
            <person name="Clutterbuck D.R."/>
            <person name="Crowe M.L."/>
            <person name="Dalla E."/>
            <person name="Dalrymple B.P."/>
            <person name="de Bono B."/>
            <person name="Della Gatta G."/>
            <person name="di Bernardo D."/>
            <person name="Down T."/>
            <person name="Engstrom P."/>
            <person name="Fagiolini M."/>
            <person name="Faulkner G."/>
            <person name="Fletcher C.F."/>
            <person name="Fukushima T."/>
            <person name="Furuno M."/>
            <person name="Futaki S."/>
            <person name="Gariboldi M."/>
            <person name="Georgii-Hemming P."/>
            <person name="Gingeras T.R."/>
            <person name="Gojobori T."/>
            <person name="Green R.E."/>
            <person name="Gustincich S."/>
            <person name="Harbers M."/>
            <person name="Hayashi Y."/>
            <person name="Hensch T.K."/>
            <person name="Hirokawa N."/>
            <person name="Hill D."/>
            <person name="Huminiecki L."/>
            <person name="Iacono M."/>
            <person name="Ikeo K."/>
            <person name="Iwama A."/>
            <person name="Ishikawa T."/>
            <person name="Jakt M."/>
            <person name="Kanapin A."/>
            <person name="Katoh M."/>
            <person name="Kawasawa Y."/>
            <person name="Kelso J."/>
            <person name="Kitamura H."/>
            <person name="Kitano H."/>
            <person name="Kollias G."/>
            <person name="Krishnan S.P."/>
            <person name="Kruger A."/>
            <person name="Kummerfeld S.K."/>
            <person name="Kurochkin I.V."/>
            <person name="Lareau L.F."/>
            <person name="Lazarevic D."/>
            <person name="Lipovich L."/>
            <person name="Liu J."/>
            <person name="Liuni S."/>
            <person name="McWilliam S."/>
            <person name="Madan Babu M."/>
            <person name="Madera M."/>
            <person name="Marchionni L."/>
            <person name="Matsuda H."/>
            <person name="Matsuzawa S."/>
            <person name="Miki H."/>
            <person name="Mignone F."/>
            <person name="Miyake S."/>
            <person name="Morris K."/>
            <person name="Mottagui-Tabar S."/>
            <person name="Mulder N."/>
            <person name="Nakano N."/>
            <person name="Nakauchi H."/>
            <person name="Ng P."/>
            <person name="Nilsson R."/>
            <person name="Nishiguchi S."/>
            <person name="Nishikawa S."/>
            <person name="Nori F."/>
            <person name="Ohara O."/>
            <person name="Okazaki Y."/>
            <person name="Orlando V."/>
            <person name="Pang K.C."/>
            <person name="Pavan W.J."/>
            <person name="Pavesi G."/>
            <person name="Pesole G."/>
            <person name="Petrovsky N."/>
            <person name="Piazza S."/>
            <person name="Reed J."/>
            <person name="Reid J.F."/>
            <person name="Ring B.Z."/>
            <person name="Ringwald M."/>
            <person name="Rost B."/>
            <person name="Ruan Y."/>
            <person name="Salzberg S.L."/>
            <person name="Sandelin A."/>
            <person name="Schneider C."/>
            <person name="Schoenbach C."/>
            <person name="Sekiguchi K."/>
            <person name="Semple C.A."/>
            <person name="Seno S."/>
            <person name="Sessa L."/>
            <person name="Sheng Y."/>
            <person name="Shibata Y."/>
            <person name="Shimada H."/>
            <person name="Shimada K."/>
            <person name="Silva D."/>
            <person name="Sinclair B."/>
            <person name="Sperling S."/>
            <person name="Stupka E."/>
            <person name="Sugiura K."/>
            <person name="Sultana R."/>
            <person name="Takenaka Y."/>
            <person name="Taki K."/>
            <person name="Tammoja K."/>
            <person name="Tan S.L."/>
            <person name="Tang S."/>
            <person name="Taylor M.S."/>
            <person name="Tegner J."/>
            <person name="Teichmann S.A."/>
            <person name="Ueda H.R."/>
            <person name="van Nimwegen E."/>
            <person name="Verardo R."/>
            <person name="Wei C.L."/>
            <person name="Yagi K."/>
            <person name="Yamanishi H."/>
            <person name="Zabarovsky E."/>
            <person name="Zhu S."/>
            <person name="Zimmer A."/>
            <person name="Hide W."/>
            <person name="Bult C."/>
            <person name="Grimmond S.M."/>
            <person name="Teasdale R.D."/>
            <person name="Liu E.T."/>
            <person name="Brusic V."/>
            <person name="Quackenbush J."/>
            <person name="Wahlestedt C."/>
            <person name="Mattick J.S."/>
            <person name="Hume D.A."/>
            <person name="Kai C."/>
            <person name="Sasaki D."/>
            <person name="Tomaru Y."/>
            <person name="Fukuda S."/>
            <person name="Kanamori-Katayama M."/>
            <person name="Suzuki M."/>
            <person name="Aoki J."/>
            <person name="Arakawa T."/>
            <person name="Iida J."/>
            <person name="Imamura K."/>
            <person name="Itoh M."/>
            <person name="Kato T."/>
            <person name="Kawaji H."/>
            <person name="Kawagashira N."/>
            <person name="Kawashima T."/>
            <person name="Kojima M."/>
            <person name="Kondo S."/>
            <person name="Konno H."/>
            <person name="Nakano K."/>
            <person name="Ninomiya N."/>
            <person name="Nishio T."/>
            <person name="Okada M."/>
            <person name="Plessy C."/>
            <person name="Shibata K."/>
            <person name="Shiraki T."/>
            <person name="Suzuki S."/>
            <person name="Tagami M."/>
            <person name="Waki K."/>
            <person name="Watahiki A."/>
            <person name="Okamura-Oho Y."/>
            <person name="Suzuki H."/>
            <person name="Kawai J."/>
            <person name="Hayashizaki Y."/>
        </authorList>
    </citation>
    <scope>NUCLEOTIDE SEQUENCE [LARGE SCALE MRNA]</scope>
    <source>
        <strain>C57BL/6J</strain>
        <tissue>Testis</tissue>
    </source>
</reference>
<comment type="subcellular location">
    <subcellularLocation>
        <location evidence="2">Mitochondrion outer membrane</location>
        <topology evidence="2">Single-pass membrane protein</topology>
    </subcellularLocation>
</comment>
<comment type="similarity">
    <text evidence="2">Belongs to the Tom20 family.</text>
</comment>
<proteinExistence type="evidence at transcript level"/>
<protein>
    <recommendedName>
        <fullName>TOMM20-like protein 1</fullName>
    </recommendedName>
</protein>
<organism>
    <name type="scientific">Mus musculus</name>
    <name type="common">Mouse</name>
    <dbReference type="NCBI Taxonomy" id="10090"/>
    <lineage>
        <taxon>Eukaryota</taxon>
        <taxon>Metazoa</taxon>
        <taxon>Chordata</taxon>
        <taxon>Craniata</taxon>
        <taxon>Vertebrata</taxon>
        <taxon>Euteleostomi</taxon>
        <taxon>Mammalia</taxon>
        <taxon>Eutheria</taxon>
        <taxon>Euarchontoglires</taxon>
        <taxon>Glires</taxon>
        <taxon>Rodentia</taxon>
        <taxon>Myomorpha</taxon>
        <taxon>Muroidea</taxon>
        <taxon>Muridae</taxon>
        <taxon>Murinae</taxon>
        <taxon>Mus</taxon>
        <taxon>Mus</taxon>
    </lineage>
</organism>
<feature type="chain" id="PRO_0000317748" description="TOMM20-like protein 1">
    <location>
        <begin position="1"/>
        <end position="152"/>
    </location>
</feature>
<feature type="topological domain" description="Mitochondrial intermembrane" evidence="1">
    <location>
        <begin position="1"/>
        <end position="6"/>
    </location>
</feature>
<feature type="transmembrane region" description="Helical" evidence="1">
    <location>
        <begin position="7"/>
        <end position="27"/>
    </location>
</feature>
<feature type="topological domain" description="Cytoplasmic" evidence="1">
    <location>
        <begin position="28"/>
        <end position="152"/>
    </location>
</feature>
<accession>Q9D4V6</accession>
<evidence type="ECO:0000255" key="1"/>
<evidence type="ECO:0000305" key="2"/>
<sequence>MPSVRLGVGLLAGLAAGGAVVLLSYCVYLDWRRHRDPAFRRRLQDKRRAGQPKAQAPARQLWDPVKKEELQEYFFREVQMGKLCLIRGERGMGFEHLTNALLVCEQPKELLMFFKKTLPPEVFQMLLDKIPLICQQLEETCRSTEHLKDDPD</sequence>
<name>TO20L_MOUSE</name>
<keyword id="KW-0472">Membrane</keyword>
<keyword id="KW-0496">Mitochondrion</keyword>
<keyword id="KW-1000">Mitochondrion outer membrane</keyword>
<keyword id="KW-1185">Reference proteome</keyword>
<keyword id="KW-0812">Transmembrane</keyword>
<keyword id="KW-1133">Transmembrane helix</keyword>